<keyword id="KW-1185">Reference proteome</keyword>
<gene>
    <name type="ORF">SPBC11G11.07</name>
    <name type="ORF">SPBC18H10.01</name>
</gene>
<dbReference type="EMBL" id="CU329671">
    <property type="protein sequence ID" value="CAB59809.2"/>
    <property type="molecule type" value="Genomic_DNA"/>
</dbReference>
<dbReference type="PIR" id="T39765">
    <property type="entry name" value="T39765"/>
</dbReference>
<dbReference type="RefSeq" id="NP_595725.2">
    <property type="nucleotide sequence ID" value="NM_001021623.2"/>
</dbReference>
<dbReference type="SMR" id="Q9USZ2"/>
<dbReference type="BioGRID" id="276460">
    <property type="interactions" value="2"/>
</dbReference>
<dbReference type="FunCoup" id="Q9USZ2">
    <property type="interactions" value="1136"/>
</dbReference>
<dbReference type="STRING" id="284812.Q9USZ2"/>
<dbReference type="PaxDb" id="4896-SPBC11G11.07.1"/>
<dbReference type="EnsemblFungi" id="SPBC11G11.07.1">
    <property type="protein sequence ID" value="SPBC11G11.07.1:pep"/>
    <property type="gene ID" value="SPBC11G11.07"/>
</dbReference>
<dbReference type="GeneID" id="2539916"/>
<dbReference type="KEGG" id="spo:2539916"/>
<dbReference type="PomBase" id="SPBC11G11.07"/>
<dbReference type="VEuPathDB" id="FungiDB:SPBC11G11.07"/>
<dbReference type="eggNOG" id="KOG2081">
    <property type="taxonomic scope" value="Eukaryota"/>
</dbReference>
<dbReference type="HOGENOM" id="CLU_005996_0_0_1"/>
<dbReference type="InParanoid" id="Q9USZ2"/>
<dbReference type="OMA" id="LECITSW"/>
<dbReference type="PhylomeDB" id="Q9USZ2"/>
<dbReference type="PRO" id="PR:Q9USZ2"/>
<dbReference type="Proteomes" id="UP000002485">
    <property type="component" value="Chromosome II"/>
</dbReference>
<dbReference type="GO" id="GO:0005737">
    <property type="term" value="C:cytoplasm"/>
    <property type="evidence" value="ECO:0000318"/>
    <property type="project" value="GO_Central"/>
</dbReference>
<dbReference type="GO" id="GO:0005829">
    <property type="term" value="C:cytosol"/>
    <property type="evidence" value="ECO:0007005"/>
    <property type="project" value="PomBase"/>
</dbReference>
<dbReference type="GO" id="GO:0005635">
    <property type="term" value="C:nuclear envelope"/>
    <property type="evidence" value="ECO:0007005"/>
    <property type="project" value="PomBase"/>
</dbReference>
<dbReference type="GO" id="GO:0005634">
    <property type="term" value="C:nucleus"/>
    <property type="evidence" value="ECO:0007005"/>
    <property type="project" value="PomBase"/>
</dbReference>
<dbReference type="GO" id="GO:0061608">
    <property type="term" value="F:nuclear import signal receptor activity"/>
    <property type="evidence" value="ECO:0000266"/>
    <property type="project" value="PomBase"/>
</dbReference>
<dbReference type="GO" id="GO:0031267">
    <property type="term" value="F:small GTPase binding"/>
    <property type="evidence" value="ECO:0007669"/>
    <property type="project" value="InterPro"/>
</dbReference>
<dbReference type="GO" id="GO:0006606">
    <property type="term" value="P:protein import into nucleus"/>
    <property type="evidence" value="ECO:0000318"/>
    <property type="project" value="GO_Central"/>
</dbReference>
<dbReference type="GO" id="GO:0006404">
    <property type="term" value="P:RNA import into nucleus"/>
    <property type="evidence" value="ECO:0000266"/>
    <property type="project" value="PomBase"/>
</dbReference>
<dbReference type="FunFam" id="1.25.10.10:FF:000266">
    <property type="entry name" value="mRNA transport regulator MTR10"/>
    <property type="match status" value="1"/>
</dbReference>
<dbReference type="Gene3D" id="1.25.10.10">
    <property type="entry name" value="Leucine-rich Repeat Variant"/>
    <property type="match status" value="1"/>
</dbReference>
<dbReference type="InterPro" id="IPR011989">
    <property type="entry name" value="ARM-like"/>
</dbReference>
<dbReference type="InterPro" id="IPR016024">
    <property type="entry name" value="ARM-type_fold"/>
</dbReference>
<dbReference type="InterPro" id="IPR013598">
    <property type="entry name" value="Exportin-1/Importin-b-like"/>
</dbReference>
<dbReference type="InterPro" id="IPR001494">
    <property type="entry name" value="Importin-beta_N"/>
</dbReference>
<dbReference type="InterPro" id="IPR051345">
    <property type="entry name" value="Importin_beta-like_NTR"/>
</dbReference>
<dbReference type="PANTHER" id="PTHR12363:SF53">
    <property type="entry name" value="MRNA TRANSPORT REGULATOR MTR10"/>
    <property type="match status" value="1"/>
</dbReference>
<dbReference type="PANTHER" id="PTHR12363">
    <property type="entry name" value="TRANSPORTIN 3 AND IMPORTIN 13"/>
    <property type="match status" value="1"/>
</dbReference>
<dbReference type="Pfam" id="PF03810">
    <property type="entry name" value="IBN_N"/>
    <property type="match status" value="1"/>
</dbReference>
<dbReference type="Pfam" id="PF24138">
    <property type="entry name" value="TPR_TNPO3_IPO13_2nd"/>
    <property type="match status" value="1"/>
</dbReference>
<dbReference type="Pfam" id="PF24140">
    <property type="entry name" value="TPR_TNPO3_IPO13_3rd"/>
    <property type="match status" value="1"/>
</dbReference>
<dbReference type="Pfam" id="PF24139">
    <property type="entry name" value="TPR_TNPO3_IPO13_4th"/>
    <property type="match status" value="1"/>
</dbReference>
<dbReference type="Pfam" id="PF08389">
    <property type="entry name" value="Xpo1"/>
    <property type="match status" value="1"/>
</dbReference>
<dbReference type="SMART" id="SM00913">
    <property type="entry name" value="IBN_N"/>
    <property type="match status" value="1"/>
</dbReference>
<dbReference type="SUPFAM" id="SSF48371">
    <property type="entry name" value="ARM repeat"/>
    <property type="match status" value="1"/>
</dbReference>
<dbReference type="PROSITE" id="PS50166">
    <property type="entry name" value="IMPORTIN_B_NT"/>
    <property type="match status" value="1"/>
</dbReference>
<feature type="chain" id="PRO_0000116859" description="Uncharacterized protein C11G11.07">
    <location>
        <begin position="1"/>
        <end position="955"/>
    </location>
</feature>
<feature type="domain" description="Importin N-terminal" evidence="1">
    <location>
        <begin position="23"/>
        <end position="90"/>
    </location>
</feature>
<reference key="1">
    <citation type="journal article" date="2002" name="Nature">
        <title>The genome sequence of Schizosaccharomyces pombe.</title>
        <authorList>
            <person name="Wood V."/>
            <person name="Gwilliam R."/>
            <person name="Rajandream M.A."/>
            <person name="Lyne M.H."/>
            <person name="Lyne R."/>
            <person name="Stewart A."/>
            <person name="Sgouros J.G."/>
            <person name="Peat N."/>
            <person name="Hayles J."/>
            <person name="Baker S.G."/>
            <person name="Basham D."/>
            <person name="Bowman S."/>
            <person name="Brooks K."/>
            <person name="Brown D."/>
            <person name="Brown S."/>
            <person name="Chillingworth T."/>
            <person name="Churcher C.M."/>
            <person name="Collins M."/>
            <person name="Connor R."/>
            <person name="Cronin A."/>
            <person name="Davis P."/>
            <person name="Feltwell T."/>
            <person name="Fraser A."/>
            <person name="Gentles S."/>
            <person name="Goble A."/>
            <person name="Hamlin N."/>
            <person name="Harris D.E."/>
            <person name="Hidalgo J."/>
            <person name="Hodgson G."/>
            <person name="Holroyd S."/>
            <person name="Hornsby T."/>
            <person name="Howarth S."/>
            <person name="Huckle E.J."/>
            <person name="Hunt S."/>
            <person name="Jagels K."/>
            <person name="James K.D."/>
            <person name="Jones L."/>
            <person name="Jones M."/>
            <person name="Leather S."/>
            <person name="McDonald S."/>
            <person name="McLean J."/>
            <person name="Mooney P."/>
            <person name="Moule S."/>
            <person name="Mungall K.L."/>
            <person name="Murphy L.D."/>
            <person name="Niblett D."/>
            <person name="Odell C."/>
            <person name="Oliver K."/>
            <person name="O'Neil S."/>
            <person name="Pearson D."/>
            <person name="Quail M.A."/>
            <person name="Rabbinowitsch E."/>
            <person name="Rutherford K.M."/>
            <person name="Rutter S."/>
            <person name="Saunders D."/>
            <person name="Seeger K."/>
            <person name="Sharp S."/>
            <person name="Skelton J."/>
            <person name="Simmonds M.N."/>
            <person name="Squares R."/>
            <person name="Squares S."/>
            <person name="Stevens K."/>
            <person name="Taylor K."/>
            <person name="Taylor R.G."/>
            <person name="Tivey A."/>
            <person name="Walsh S.V."/>
            <person name="Warren T."/>
            <person name="Whitehead S."/>
            <person name="Woodward J.R."/>
            <person name="Volckaert G."/>
            <person name="Aert R."/>
            <person name="Robben J."/>
            <person name="Grymonprez B."/>
            <person name="Weltjens I."/>
            <person name="Vanstreels E."/>
            <person name="Rieger M."/>
            <person name="Schaefer M."/>
            <person name="Mueller-Auer S."/>
            <person name="Gabel C."/>
            <person name="Fuchs M."/>
            <person name="Duesterhoeft A."/>
            <person name="Fritzc C."/>
            <person name="Holzer E."/>
            <person name="Moestl D."/>
            <person name="Hilbert H."/>
            <person name="Borzym K."/>
            <person name="Langer I."/>
            <person name="Beck A."/>
            <person name="Lehrach H."/>
            <person name="Reinhardt R."/>
            <person name="Pohl T.M."/>
            <person name="Eger P."/>
            <person name="Zimmermann W."/>
            <person name="Wedler H."/>
            <person name="Wambutt R."/>
            <person name="Purnelle B."/>
            <person name="Goffeau A."/>
            <person name="Cadieu E."/>
            <person name="Dreano S."/>
            <person name="Gloux S."/>
            <person name="Lelaure V."/>
            <person name="Mottier S."/>
            <person name="Galibert F."/>
            <person name="Aves S.J."/>
            <person name="Xiang Z."/>
            <person name="Hunt C."/>
            <person name="Moore K."/>
            <person name="Hurst S.M."/>
            <person name="Lucas M."/>
            <person name="Rochet M."/>
            <person name="Gaillardin C."/>
            <person name="Tallada V.A."/>
            <person name="Garzon A."/>
            <person name="Thode G."/>
            <person name="Daga R.R."/>
            <person name="Cruzado L."/>
            <person name="Jimenez J."/>
            <person name="Sanchez M."/>
            <person name="del Rey F."/>
            <person name="Benito J."/>
            <person name="Dominguez A."/>
            <person name="Revuelta J.L."/>
            <person name="Moreno S."/>
            <person name="Armstrong J."/>
            <person name="Forsburg S.L."/>
            <person name="Cerutti L."/>
            <person name="Lowe T."/>
            <person name="McCombie W.R."/>
            <person name="Paulsen I."/>
            <person name="Potashkin J."/>
            <person name="Shpakovski G.V."/>
            <person name="Ussery D."/>
            <person name="Barrell B.G."/>
            <person name="Nurse P."/>
        </authorList>
    </citation>
    <scope>NUCLEOTIDE SEQUENCE [LARGE SCALE GENOMIC DNA]</scope>
    <source>
        <strain>972 / ATCC 24843</strain>
    </source>
</reference>
<sequence length="955" mass="108173">METLLSALATLYANTDREQKLQANNYLEEFQKSPAAWQICFSILNQDDSSIEAKLFAAQTLRQKIVYDFHQLPKETHIEFRNSLLQLFLAAKDSPRPLLVSLAVCMAAIALHMTEWHNVIADVFQACSSKDPSGRCVLQFLSVLPEEASDPRKTSLSWEELCIRVDELLRDNGPAVLELLVQYVDAVRASGSPSSADLGLVLTSLISWLREIPLDKVMASPLIELAFRSLDDDLLLEDAVEFLCALFNETKDVDETTDAILMLYPRLLELQPKLIAACDDPETFRALGRLFAEAGEAWVVLIARMPNDFLPLVNCIAQVAANDTELEAIKFTFAFWWDLKQMVELDVYAEARQLFAPIYLELVRIIVRHLHYPRTEDLAINEQMASNEVLFEDRDAEDRFRSFRHEMGDVLKDCCVVAGVSSCLVQISSQLIKVLKIKESGLPYYWQDVEAPLFALRAIGRMVPANEDQVIGSLFQILPQLPENNKVRYAATLFLGRYTEWTAQHSEFLELQLNYISAGFEVANKEVQSAAAQALKHFCYDCREQLVGHLSQLHMFYLNAKTYLAPDPLMEVAQGLAHIVDIQPVANVYQSVHSFLAPSLQSILLAQVKLNPTQAELEALADNIDIVTIFLSLVHPPSPAGELHPIVRLFQDIWPILSRTLDTFSDVLICERISKLLKNFIYTFKEKAIVTLPVITEALIKGFEKTQYGCFLWVSGACVRQFGVPEMDEQTLSAVWSFVGKQCTNMFYYMSNKNPKEIPDVIDDFFRLMMDALLANPQMVLESQMLESLIQAAMMSLQLEQQEPLQTVLNFLQDLLAFALHTPPYSLIEPLPDSLLKSLADLLLKNSQELYIILFNGMVFTFPRDNISDASAVLIPLIRLVFAADPSLCIKYMSNVLDQLPAMTIGQEEREKFLANFSKHCTSSEMPRLRAHLQDWTAMYRRRVLTPRAKLISDD</sequence>
<proteinExistence type="predicted"/>
<accession>Q9USZ2</accession>
<accession>O60134</accession>
<name>YNR7_SCHPO</name>
<protein>
    <recommendedName>
        <fullName>Uncharacterized protein C11G11.07</fullName>
    </recommendedName>
</protein>
<organism>
    <name type="scientific">Schizosaccharomyces pombe (strain 972 / ATCC 24843)</name>
    <name type="common">Fission yeast</name>
    <dbReference type="NCBI Taxonomy" id="284812"/>
    <lineage>
        <taxon>Eukaryota</taxon>
        <taxon>Fungi</taxon>
        <taxon>Dikarya</taxon>
        <taxon>Ascomycota</taxon>
        <taxon>Taphrinomycotina</taxon>
        <taxon>Schizosaccharomycetes</taxon>
        <taxon>Schizosaccharomycetales</taxon>
        <taxon>Schizosaccharomycetaceae</taxon>
        <taxon>Schizosaccharomyces</taxon>
    </lineage>
</organism>
<evidence type="ECO:0000255" key="1">
    <source>
        <dbReference type="PROSITE-ProRule" id="PRU00115"/>
    </source>
</evidence>